<dbReference type="EMBL" id="BA000016">
    <property type="protein sequence ID" value="BAB80062.1"/>
    <property type="molecule type" value="Genomic_DNA"/>
</dbReference>
<dbReference type="RefSeq" id="WP_011009761.1">
    <property type="nucleotide sequence ID" value="NC_003366.1"/>
</dbReference>
<dbReference type="SMR" id="Q8XNH7"/>
<dbReference type="STRING" id="195102.gene:10489612"/>
<dbReference type="KEGG" id="cpe:CPE0356"/>
<dbReference type="HOGENOM" id="CLU_053282_0_0_9"/>
<dbReference type="Proteomes" id="UP000000818">
    <property type="component" value="Chromosome"/>
</dbReference>
<dbReference type="GO" id="GO:0003677">
    <property type="term" value="F:DNA binding"/>
    <property type="evidence" value="ECO:0007669"/>
    <property type="project" value="UniProtKB-UniRule"/>
</dbReference>
<dbReference type="GO" id="GO:0004519">
    <property type="term" value="F:endonuclease activity"/>
    <property type="evidence" value="ECO:0007669"/>
    <property type="project" value="InterPro"/>
</dbReference>
<dbReference type="GO" id="GO:0051301">
    <property type="term" value="P:cell division"/>
    <property type="evidence" value="ECO:0007669"/>
    <property type="project" value="UniProtKB-UniRule"/>
</dbReference>
<dbReference type="GO" id="GO:0043937">
    <property type="term" value="P:regulation of sporulation"/>
    <property type="evidence" value="ECO:0007669"/>
    <property type="project" value="InterPro"/>
</dbReference>
<dbReference type="Gene3D" id="3.10.28.10">
    <property type="entry name" value="Homing endonucleases"/>
    <property type="match status" value="1"/>
</dbReference>
<dbReference type="HAMAP" id="MF_01420">
    <property type="entry name" value="HTH_type_WhiA"/>
    <property type="match status" value="1"/>
</dbReference>
<dbReference type="InterPro" id="IPR027434">
    <property type="entry name" value="Homing_endonucl"/>
</dbReference>
<dbReference type="InterPro" id="IPR004042">
    <property type="entry name" value="Intein_endonuc_central"/>
</dbReference>
<dbReference type="InterPro" id="IPR018478">
    <property type="entry name" value="Sporu_reg_WhiA_N_dom"/>
</dbReference>
<dbReference type="InterPro" id="IPR003802">
    <property type="entry name" value="Sporulation_regulator_WhiA"/>
</dbReference>
<dbReference type="InterPro" id="IPR023054">
    <property type="entry name" value="Sporulation_regulator_WhiA_C"/>
</dbReference>
<dbReference type="InterPro" id="IPR039518">
    <property type="entry name" value="WhiA_LAGLIDADG_dom"/>
</dbReference>
<dbReference type="NCBIfam" id="TIGR00647">
    <property type="entry name" value="DNA_bind_WhiA"/>
    <property type="match status" value="1"/>
</dbReference>
<dbReference type="PANTHER" id="PTHR37307">
    <property type="entry name" value="CELL DIVISION PROTEIN WHIA-RELATED"/>
    <property type="match status" value="1"/>
</dbReference>
<dbReference type="PANTHER" id="PTHR37307:SF1">
    <property type="entry name" value="CELL DIVISION PROTEIN WHIA-RELATED"/>
    <property type="match status" value="1"/>
</dbReference>
<dbReference type="Pfam" id="PF02650">
    <property type="entry name" value="HTH_WhiA"/>
    <property type="match status" value="1"/>
</dbReference>
<dbReference type="Pfam" id="PF14527">
    <property type="entry name" value="LAGLIDADG_WhiA"/>
    <property type="match status" value="1"/>
</dbReference>
<dbReference type="Pfam" id="PF10298">
    <property type="entry name" value="WhiA_N"/>
    <property type="match status" value="1"/>
</dbReference>
<dbReference type="SUPFAM" id="SSF55608">
    <property type="entry name" value="Homing endonucleases"/>
    <property type="match status" value="1"/>
</dbReference>
<dbReference type="PROSITE" id="PS50819">
    <property type="entry name" value="INTEIN_ENDONUCLEASE"/>
    <property type="match status" value="1"/>
</dbReference>
<comment type="function">
    <text evidence="1">Involved in cell division and chromosome segregation.</text>
</comment>
<comment type="similarity">
    <text evidence="1">Belongs to the WhiA family.</text>
</comment>
<proteinExistence type="inferred from homology"/>
<sequence>MSFSAKVKGEICRYIDISKEEALAQISAIMKVCGTLAFSGRQISFKMTTENPASARLMFTILKDYFDIHAKLMVKKSNSLKKNNIYMVVVTEEMGVKKLLEVTGILREIDGIMSLDYHIDENLVDTEEKKKAYIRGAFIGGGSISNPEKTYHLEFVTHSQEYAEDLGKLINTFGLKAKVIQRKNSYIVYIKEGEQIVDLLNIIGAHTALLELENIRIMKEMRNNVNRLVNCETANLSKTVNAAVRQVESIKLIEREIGLARLPKNLREVAELRLTYPEESLKELGEMLEPPVGKSGVNHRLRKIEKIAEELRTGNF</sequence>
<accession>Q8XNH7</accession>
<name>WHIA_CLOPE</name>
<evidence type="ECO:0000255" key="1">
    <source>
        <dbReference type="HAMAP-Rule" id="MF_01420"/>
    </source>
</evidence>
<protein>
    <recommendedName>
        <fullName evidence="1">Probable cell division protein WhiA</fullName>
    </recommendedName>
</protein>
<gene>
    <name evidence="1" type="primary">whiA</name>
    <name type="ordered locus">CPE0356</name>
</gene>
<feature type="chain" id="PRO_0000376466" description="Probable cell division protein WhiA">
    <location>
        <begin position="1"/>
        <end position="316"/>
    </location>
</feature>
<feature type="DNA-binding region" description="H-T-H motif" evidence="1">
    <location>
        <begin position="280"/>
        <end position="313"/>
    </location>
</feature>
<organism>
    <name type="scientific">Clostridium perfringens (strain 13 / Type A)</name>
    <dbReference type="NCBI Taxonomy" id="195102"/>
    <lineage>
        <taxon>Bacteria</taxon>
        <taxon>Bacillati</taxon>
        <taxon>Bacillota</taxon>
        <taxon>Clostridia</taxon>
        <taxon>Eubacteriales</taxon>
        <taxon>Clostridiaceae</taxon>
        <taxon>Clostridium</taxon>
    </lineage>
</organism>
<reference key="1">
    <citation type="journal article" date="2002" name="Proc. Natl. Acad. Sci. U.S.A.">
        <title>Complete genome sequence of Clostridium perfringens, an anaerobic flesh-eater.</title>
        <authorList>
            <person name="Shimizu T."/>
            <person name="Ohtani K."/>
            <person name="Hirakawa H."/>
            <person name="Ohshima K."/>
            <person name="Yamashita A."/>
            <person name="Shiba T."/>
            <person name="Ogasawara N."/>
            <person name="Hattori M."/>
            <person name="Kuhara S."/>
            <person name="Hayashi H."/>
        </authorList>
    </citation>
    <scope>NUCLEOTIDE SEQUENCE [LARGE SCALE GENOMIC DNA]</scope>
    <source>
        <strain>13 / Type A</strain>
    </source>
</reference>
<keyword id="KW-0131">Cell cycle</keyword>
<keyword id="KW-0132">Cell division</keyword>
<keyword id="KW-0238">DNA-binding</keyword>
<keyword id="KW-1185">Reference proteome</keyword>